<organism>
    <name type="scientific">Shigella boydii serotype 4 (strain Sb227)</name>
    <dbReference type="NCBI Taxonomy" id="300268"/>
    <lineage>
        <taxon>Bacteria</taxon>
        <taxon>Pseudomonadati</taxon>
        <taxon>Pseudomonadota</taxon>
        <taxon>Gammaproteobacteria</taxon>
        <taxon>Enterobacterales</taxon>
        <taxon>Enterobacteriaceae</taxon>
        <taxon>Shigella</taxon>
    </lineage>
</organism>
<feature type="chain" id="PRO_0000230108" description="Transcriptional regulator MraZ">
    <location>
        <begin position="1"/>
        <end position="152"/>
    </location>
</feature>
<feature type="domain" description="SpoVT-AbrB 1" evidence="2">
    <location>
        <begin position="5"/>
        <end position="52"/>
    </location>
</feature>
<feature type="domain" description="SpoVT-AbrB 2" evidence="2">
    <location>
        <begin position="81"/>
        <end position="124"/>
    </location>
</feature>
<reference key="1">
    <citation type="journal article" date="2005" name="Nucleic Acids Res.">
        <title>Genome dynamics and diversity of Shigella species, the etiologic agents of bacillary dysentery.</title>
        <authorList>
            <person name="Yang F."/>
            <person name="Yang J."/>
            <person name="Zhang X."/>
            <person name="Chen L."/>
            <person name="Jiang Y."/>
            <person name="Yan Y."/>
            <person name="Tang X."/>
            <person name="Wang J."/>
            <person name="Xiong Z."/>
            <person name="Dong J."/>
            <person name="Xue Y."/>
            <person name="Zhu Y."/>
            <person name="Xu X."/>
            <person name="Sun L."/>
            <person name="Chen S."/>
            <person name="Nie H."/>
            <person name="Peng J."/>
            <person name="Xu J."/>
            <person name="Wang Y."/>
            <person name="Yuan Z."/>
            <person name="Wen Y."/>
            <person name="Yao Z."/>
            <person name="Shen Y."/>
            <person name="Qiang B."/>
            <person name="Hou Y."/>
            <person name="Yu J."/>
            <person name="Jin Q."/>
        </authorList>
    </citation>
    <scope>NUCLEOTIDE SEQUENCE [LARGE SCALE GENOMIC DNA]</scope>
    <source>
        <strain>Sb227</strain>
    </source>
</reference>
<gene>
    <name evidence="1" type="primary">mraZ</name>
    <name type="ordered locus">SBO_0069</name>
</gene>
<dbReference type="EMBL" id="CP000036">
    <property type="protein sequence ID" value="ABB64804.1"/>
    <property type="molecule type" value="Genomic_DNA"/>
</dbReference>
<dbReference type="RefSeq" id="WP_001295770.1">
    <property type="nucleotide sequence ID" value="NC_007613.1"/>
</dbReference>
<dbReference type="SMR" id="Q326F4"/>
<dbReference type="GeneID" id="75202102"/>
<dbReference type="KEGG" id="sbo:SBO_0069"/>
<dbReference type="HOGENOM" id="CLU_107907_2_0_6"/>
<dbReference type="Proteomes" id="UP000007067">
    <property type="component" value="Chromosome"/>
</dbReference>
<dbReference type="GO" id="GO:0005737">
    <property type="term" value="C:cytoplasm"/>
    <property type="evidence" value="ECO:0007669"/>
    <property type="project" value="UniProtKB-UniRule"/>
</dbReference>
<dbReference type="GO" id="GO:0009295">
    <property type="term" value="C:nucleoid"/>
    <property type="evidence" value="ECO:0007669"/>
    <property type="project" value="UniProtKB-SubCell"/>
</dbReference>
<dbReference type="GO" id="GO:0003700">
    <property type="term" value="F:DNA-binding transcription factor activity"/>
    <property type="evidence" value="ECO:0007669"/>
    <property type="project" value="UniProtKB-UniRule"/>
</dbReference>
<dbReference type="GO" id="GO:0000976">
    <property type="term" value="F:transcription cis-regulatory region binding"/>
    <property type="evidence" value="ECO:0007669"/>
    <property type="project" value="TreeGrafter"/>
</dbReference>
<dbReference type="GO" id="GO:2000143">
    <property type="term" value="P:negative regulation of DNA-templated transcription initiation"/>
    <property type="evidence" value="ECO:0007669"/>
    <property type="project" value="TreeGrafter"/>
</dbReference>
<dbReference type="CDD" id="cd16321">
    <property type="entry name" value="MraZ_C"/>
    <property type="match status" value="1"/>
</dbReference>
<dbReference type="CDD" id="cd16320">
    <property type="entry name" value="MraZ_N"/>
    <property type="match status" value="1"/>
</dbReference>
<dbReference type="FunFam" id="3.40.1550.20:FF:000001">
    <property type="entry name" value="Transcriptional regulator MraZ"/>
    <property type="match status" value="1"/>
</dbReference>
<dbReference type="Gene3D" id="3.40.1550.20">
    <property type="entry name" value="Transcriptional regulator MraZ domain"/>
    <property type="match status" value="1"/>
</dbReference>
<dbReference type="HAMAP" id="MF_01008">
    <property type="entry name" value="MraZ"/>
    <property type="match status" value="1"/>
</dbReference>
<dbReference type="InterPro" id="IPR003444">
    <property type="entry name" value="MraZ"/>
</dbReference>
<dbReference type="InterPro" id="IPR035644">
    <property type="entry name" value="MraZ_C"/>
</dbReference>
<dbReference type="InterPro" id="IPR020603">
    <property type="entry name" value="MraZ_dom"/>
</dbReference>
<dbReference type="InterPro" id="IPR035642">
    <property type="entry name" value="MraZ_N"/>
</dbReference>
<dbReference type="InterPro" id="IPR038619">
    <property type="entry name" value="MraZ_sf"/>
</dbReference>
<dbReference type="InterPro" id="IPR007159">
    <property type="entry name" value="SpoVT-AbrB_dom"/>
</dbReference>
<dbReference type="InterPro" id="IPR037914">
    <property type="entry name" value="SpoVT-AbrB_sf"/>
</dbReference>
<dbReference type="NCBIfam" id="TIGR00242">
    <property type="entry name" value="division/cell wall cluster transcriptional repressor MraZ"/>
    <property type="match status" value="1"/>
</dbReference>
<dbReference type="PANTHER" id="PTHR34701">
    <property type="entry name" value="TRANSCRIPTIONAL REGULATOR MRAZ"/>
    <property type="match status" value="1"/>
</dbReference>
<dbReference type="PANTHER" id="PTHR34701:SF1">
    <property type="entry name" value="TRANSCRIPTIONAL REGULATOR MRAZ"/>
    <property type="match status" value="1"/>
</dbReference>
<dbReference type="Pfam" id="PF02381">
    <property type="entry name" value="MraZ"/>
    <property type="match status" value="2"/>
</dbReference>
<dbReference type="SUPFAM" id="SSF89447">
    <property type="entry name" value="AbrB/MazE/MraZ-like"/>
    <property type="match status" value="1"/>
</dbReference>
<dbReference type="PROSITE" id="PS51740">
    <property type="entry name" value="SPOVT_ABRB"/>
    <property type="match status" value="2"/>
</dbReference>
<protein>
    <recommendedName>
        <fullName>Transcriptional regulator MraZ</fullName>
    </recommendedName>
</protein>
<comment type="function">
    <text evidence="1">Negatively regulates its own expression and that of the subsequent genes in the proximal part of the division and cell wall (dcw) gene cluster. Acts by binding directly to DNA. May also regulate the expression of genes outside the dcw cluster.</text>
</comment>
<comment type="subunit">
    <text evidence="1">Forms oligomers.</text>
</comment>
<comment type="subcellular location">
    <subcellularLocation>
        <location evidence="1">Cytoplasm</location>
        <location evidence="1">Nucleoid</location>
    </subcellularLocation>
</comment>
<comment type="similarity">
    <text evidence="1">Belongs to the MraZ family.</text>
</comment>
<name>MRAZ_SHIBS</name>
<sequence length="152" mass="17360">MFRGATLVNLDSKGRLSVPTRYREQLLENAAGQMVCTIDIHHPCLLLYPLPEWEIIEQKLSRLSSMNPVERRVQRLLLGHASECQMDGAGRLLIAPVLRQHAGLTKEVMLVGQFNKFELWDETTWHQQVKEDIDAEQLATGDLSERLQDLSL</sequence>
<keyword id="KW-0963">Cytoplasm</keyword>
<keyword id="KW-0238">DNA-binding</keyword>
<keyword id="KW-0677">Repeat</keyword>
<keyword id="KW-0678">Repressor</keyword>
<keyword id="KW-0804">Transcription</keyword>
<keyword id="KW-0805">Transcription regulation</keyword>
<proteinExistence type="inferred from homology"/>
<accession>Q326F4</accession>
<evidence type="ECO:0000255" key="1">
    <source>
        <dbReference type="HAMAP-Rule" id="MF_01008"/>
    </source>
</evidence>
<evidence type="ECO:0000255" key="2">
    <source>
        <dbReference type="PROSITE-ProRule" id="PRU01076"/>
    </source>
</evidence>